<protein>
    <recommendedName>
        <fullName evidence="1">Peptide methionine sulfoxide reductase MsrB</fullName>
        <ecNumber evidence="1">1.8.4.12</ecNumber>
    </recommendedName>
    <alternativeName>
        <fullName evidence="1">Peptide-methionine (R)-S-oxide reductase</fullName>
    </alternativeName>
</protein>
<comment type="catalytic activity">
    <reaction evidence="1">
        <text>L-methionyl-[protein] + [thioredoxin]-disulfide + H2O = L-methionyl-(R)-S-oxide-[protein] + [thioredoxin]-dithiol</text>
        <dbReference type="Rhea" id="RHEA:24164"/>
        <dbReference type="Rhea" id="RHEA-COMP:10698"/>
        <dbReference type="Rhea" id="RHEA-COMP:10700"/>
        <dbReference type="Rhea" id="RHEA-COMP:12313"/>
        <dbReference type="Rhea" id="RHEA-COMP:12314"/>
        <dbReference type="ChEBI" id="CHEBI:15377"/>
        <dbReference type="ChEBI" id="CHEBI:16044"/>
        <dbReference type="ChEBI" id="CHEBI:29950"/>
        <dbReference type="ChEBI" id="CHEBI:45764"/>
        <dbReference type="ChEBI" id="CHEBI:50058"/>
        <dbReference type="EC" id="1.8.4.12"/>
    </reaction>
</comment>
<comment type="cofactor">
    <cofactor evidence="1">
        <name>Zn(2+)</name>
        <dbReference type="ChEBI" id="CHEBI:29105"/>
    </cofactor>
    <text evidence="1">Binds 1 zinc ion per subunit. The zinc ion is important for the structural integrity of the protein.</text>
</comment>
<comment type="similarity">
    <text evidence="1">Belongs to the MsrB Met sulfoxide reductase family.</text>
</comment>
<organism>
    <name type="scientific">Saccharophagus degradans (strain 2-40 / ATCC 43961 / DSM 17024)</name>
    <dbReference type="NCBI Taxonomy" id="203122"/>
    <lineage>
        <taxon>Bacteria</taxon>
        <taxon>Pseudomonadati</taxon>
        <taxon>Pseudomonadota</taxon>
        <taxon>Gammaproteobacteria</taxon>
        <taxon>Cellvibrionales</taxon>
        <taxon>Cellvibrionaceae</taxon>
        <taxon>Saccharophagus</taxon>
    </lineage>
</organism>
<feature type="chain" id="PRO_1000215179" description="Peptide methionine sulfoxide reductase MsrB">
    <location>
        <begin position="1"/>
        <end position="134"/>
    </location>
</feature>
<feature type="domain" description="MsrB" evidence="2">
    <location>
        <begin position="9"/>
        <end position="131"/>
    </location>
</feature>
<feature type="active site" description="Nucleophile" evidence="2">
    <location>
        <position position="120"/>
    </location>
</feature>
<feature type="binding site" evidence="2">
    <location>
        <position position="48"/>
    </location>
    <ligand>
        <name>Zn(2+)</name>
        <dbReference type="ChEBI" id="CHEBI:29105"/>
    </ligand>
</feature>
<feature type="binding site" evidence="2">
    <location>
        <position position="51"/>
    </location>
    <ligand>
        <name>Zn(2+)</name>
        <dbReference type="ChEBI" id="CHEBI:29105"/>
    </ligand>
</feature>
<feature type="binding site" evidence="2">
    <location>
        <position position="97"/>
    </location>
    <ligand>
        <name>Zn(2+)</name>
        <dbReference type="ChEBI" id="CHEBI:29105"/>
    </ligand>
</feature>
<feature type="binding site" evidence="2">
    <location>
        <position position="100"/>
    </location>
    <ligand>
        <name>Zn(2+)</name>
        <dbReference type="ChEBI" id="CHEBI:29105"/>
    </ligand>
</feature>
<gene>
    <name evidence="1" type="primary">msrB</name>
    <name type="ordered locus">Sde_1165</name>
</gene>
<reference key="1">
    <citation type="journal article" date="2008" name="PLoS Genet.">
        <title>Complete genome sequence of the complex carbohydrate-degrading marine bacterium, Saccharophagus degradans strain 2-40 T.</title>
        <authorList>
            <person name="Weiner R.M."/>
            <person name="Taylor L.E. II"/>
            <person name="Henrissat B."/>
            <person name="Hauser L."/>
            <person name="Land M."/>
            <person name="Coutinho P.M."/>
            <person name="Rancurel C."/>
            <person name="Saunders E.H."/>
            <person name="Longmire A.G."/>
            <person name="Zhang H."/>
            <person name="Bayer E.A."/>
            <person name="Gilbert H.J."/>
            <person name="Larimer F."/>
            <person name="Zhulin I.B."/>
            <person name="Ekborg N.A."/>
            <person name="Lamed R."/>
            <person name="Richardson P.M."/>
            <person name="Borovok I."/>
            <person name="Hutcheson S."/>
        </authorList>
    </citation>
    <scope>NUCLEOTIDE SEQUENCE [LARGE SCALE GENOMIC DNA]</scope>
    <source>
        <strain>2-40 / ATCC 43961 / DSM 17024</strain>
    </source>
</reference>
<name>MSRB_SACD2</name>
<dbReference type="EC" id="1.8.4.12" evidence="1"/>
<dbReference type="EMBL" id="CP000282">
    <property type="protein sequence ID" value="ABD80427.1"/>
    <property type="molecule type" value="Genomic_DNA"/>
</dbReference>
<dbReference type="RefSeq" id="WP_011467647.1">
    <property type="nucleotide sequence ID" value="NC_007912.1"/>
</dbReference>
<dbReference type="SMR" id="Q21LK2"/>
<dbReference type="STRING" id="203122.Sde_1165"/>
<dbReference type="GeneID" id="98612842"/>
<dbReference type="KEGG" id="sde:Sde_1165"/>
<dbReference type="eggNOG" id="COG0229">
    <property type="taxonomic scope" value="Bacteria"/>
</dbReference>
<dbReference type="HOGENOM" id="CLU_031040_8_5_6"/>
<dbReference type="OrthoDB" id="9785497at2"/>
<dbReference type="Proteomes" id="UP000001947">
    <property type="component" value="Chromosome"/>
</dbReference>
<dbReference type="GO" id="GO:0005737">
    <property type="term" value="C:cytoplasm"/>
    <property type="evidence" value="ECO:0007669"/>
    <property type="project" value="TreeGrafter"/>
</dbReference>
<dbReference type="GO" id="GO:0033743">
    <property type="term" value="F:peptide-methionine (R)-S-oxide reductase activity"/>
    <property type="evidence" value="ECO:0007669"/>
    <property type="project" value="UniProtKB-UniRule"/>
</dbReference>
<dbReference type="GO" id="GO:0008270">
    <property type="term" value="F:zinc ion binding"/>
    <property type="evidence" value="ECO:0007669"/>
    <property type="project" value="UniProtKB-UniRule"/>
</dbReference>
<dbReference type="GO" id="GO:0030091">
    <property type="term" value="P:protein repair"/>
    <property type="evidence" value="ECO:0007669"/>
    <property type="project" value="InterPro"/>
</dbReference>
<dbReference type="GO" id="GO:0006979">
    <property type="term" value="P:response to oxidative stress"/>
    <property type="evidence" value="ECO:0007669"/>
    <property type="project" value="InterPro"/>
</dbReference>
<dbReference type="FunFam" id="2.170.150.20:FF:000001">
    <property type="entry name" value="Peptide methionine sulfoxide reductase MsrB"/>
    <property type="match status" value="1"/>
</dbReference>
<dbReference type="Gene3D" id="2.170.150.20">
    <property type="entry name" value="Peptide methionine sulfoxide reductase"/>
    <property type="match status" value="1"/>
</dbReference>
<dbReference type="HAMAP" id="MF_01400">
    <property type="entry name" value="MsrB"/>
    <property type="match status" value="1"/>
</dbReference>
<dbReference type="InterPro" id="IPR028427">
    <property type="entry name" value="Met_Sox_Rdtase_MsrB"/>
</dbReference>
<dbReference type="InterPro" id="IPR002579">
    <property type="entry name" value="Met_Sox_Rdtase_MsrB_dom"/>
</dbReference>
<dbReference type="InterPro" id="IPR011057">
    <property type="entry name" value="Mss4-like_sf"/>
</dbReference>
<dbReference type="NCBIfam" id="TIGR00357">
    <property type="entry name" value="peptide-methionine (R)-S-oxide reductase MsrB"/>
    <property type="match status" value="1"/>
</dbReference>
<dbReference type="PANTHER" id="PTHR10173">
    <property type="entry name" value="METHIONINE SULFOXIDE REDUCTASE"/>
    <property type="match status" value="1"/>
</dbReference>
<dbReference type="PANTHER" id="PTHR10173:SF52">
    <property type="entry name" value="METHIONINE-R-SULFOXIDE REDUCTASE B1"/>
    <property type="match status" value="1"/>
</dbReference>
<dbReference type="Pfam" id="PF01641">
    <property type="entry name" value="SelR"/>
    <property type="match status" value="1"/>
</dbReference>
<dbReference type="SUPFAM" id="SSF51316">
    <property type="entry name" value="Mss4-like"/>
    <property type="match status" value="1"/>
</dbReference>
<dbReference type="PROSITE" id="PS51790">
    <property type="entry name" value="MSRB"/>
    <property type="match status" value="1"/>
</dbReference>
<evidence type="ECO:0000255" key="1">
    <source>
        <dbReference type="HAMAP-Rule" id="MF_01400"/>
    </source>
</evidence>
<evidence type="ECO:0000255" key="2">
    <source>
        <dbReference type="PROSITE-ProRule" id="PRU01126"/>
    </source>
</evidence>
<accession>Q21LK2</accession>
<sequence>MSDLTKKDDEYWRDKLDAEQFRICREKGTERPFTGEYCDSKEPGTYLCRCCAEPLFESATKYDSGSGWPSFFQPIKGDAVGEIKDTSHGMVRVEVVCHNCGCHLGHVFPDGPKPTGLRYCINSASIQLQKEGAE</sequence>
<keyword id="KW-0479">Metal-binding</keyword>
<keyword id="KW-0560">Oxidoreductase</keyword>
<keyword id="KW-1185">Reference proteome</keyword>
<keyword id="KW-0862">Zinc</keyword>
<proteinExistence type="inferred from homology"/>